<proteinExistence type="inferred from homology"/>
<gene>
    <name evidence="1" type="primary">trmD</name>
    <name type="ordered locus">MMOB4290</name>
</gene>
<keyword id="KW-0963">Cytoplasm</keyword>
<keyword id="KW-0489">Methyltransferase</keyword>
<keyword id="KW-1185">Reference proteome</keyword>
<keyword id="KW-0949">S-adenosyl-L-methionine</keyword>
<keyword id="KW-0808">Transferase</keyword>
<keyword id="KW-0819">tRNA processing</keyword>
<dbReference type="EC" id="2.1.1.228" evidence="1"/>
<dbReference type="EMBL" id="AE017308">
    <property type="protein sequence ID" value="AAT27915.1"/>
    <property type="molecule type" value="Genomic_DNA"/>
</dbReference>
<dbReference type="SMR" id="Q6KHL5"/>
<dbReference type="STRING" id="267748.MMOB4290"/>
<dbReference type="KEGG" id="mmo:MMOB4290"/>
<dbReference type="eggNOG" id="COG0336">
    <property type="taxonomic scope" value="Bacteria"/>
</dbReference>
<dbReference type="HOGENOM" id="CLU_047363_0_2_14"/>
<dbReference type="Proteomes" id="UP000009072">
    <property type="component" value="Chromosome"/>
</dbReference>
<dbReference type="GO" id="GO:0005829">
    <property type="term" value="C:cytosol"/>
    <property type="evidence" value="ECO:0007669"/>
    <property type="project" value="TreeGrafter"/>
</dbReference>
<dbReference type="GO" id="GO:0052906">
    <property type="term" value="F:tRNA (guanine(37)-N1)-methyltransferase activity"/>
    <property type="evidence" value="ECO:0007669"/>
    <property type="project" value="UniProtKB-UniRule"/>
</dbReference>
<dbReference type="GO" id="GO:0002939">
    <property type="term" value="P:tRNA N1-guanine methylation"/>
    <property type="evidence" value="ECO:0007669"/>
    <property type="project" value="TreeGrafter"/>
</dbReference>
<dbReference type="CDD" id="cd18080">
    <property type="entry name" value="TrmD-like"/>
    <property type="match status" value="1"/>
</dbReference>
<dbReference type="FunFam" id="1.10.1270.20:FF:000001">
    <property type="entry name" value="tRNA (guanine-N(1)-)-methyltransferase"/>
    <property type="match status" value="1"/>
</dbReference>
<dbReference type="Gene3D" id="3.40.1280.10">
    <property type="match status" value="1"/>
</dbReference>
<dbReference type="Gene3D" id="1.10.1270.20">
    <property type="entry name" value="tRNA(m1g37)methyltransferase, domain 2"/>
    <property type="match status" value="1"/>
</dbReference>
<dbReference type="HAMAP" id="MF_00605">
    <property type="entry name" value="TrmD"/>
    <property type="match status" value="1"/>
</dbReference>
<dbReference type="InterPro" id="IPR029028">
    <property type="entry name" value="Alpha/beta_knot_MTases"/>
</dbReference>
<dbReference type="InterPro" id="IPR023148">
    <property type="entry name" value="tRNA_m1G_MeTrfase_C_sf"/>
</dbReference>
<dbReference type="InterPro" id="IPR002649">
    <property type="entry name" value="tRNA_m1G_MeTrfase_TrmD"/>
</dbReference>
<dbReference type="InterPro" id="IPR029026">
    <property type="entry name" value="tRNA_m1G_MTases_N"/>
</dbReference>
<dbReference type="InterPro" id="IPR016009">
    <property type="entry name" value="tRNA_MeTrfase_TRMD/TRM10"/>
</dbReference>
<dbReference type="NCBIfam" id="NF000648">
    <property type="entry name" value="PRK00026.1"/>
    <property type="match status" value="1"/>
</dbReference>
<dbReference type="NCBIfam" id="TIGR00088">
    <property type="entry name" value="trmD"/>
    <property type="match status" value="1"/>
</dbReference>
<dbReference type="PANTHER" id="PTHR46417">
    <property type="entry name" value="TRNA (GUANINE-N(1)-)-METHYLTRANSFERASE"/>
    <property type="match status" value="1"/>
</dbReference>
<dbReference type="PANTHER" id="PTHR46417:SF1">
    <property type="entry name" value="TRNA (GUANINE-N(1)-)-METHYLTRANSFERASE"/>
    <property type="match status" value="1"/>
</dbReference>
<dbReference type="Pfam" id="PF01746">
    <property type="entry name" value="tRNA_m1G_MT"/>
    <property type="match status" value="1"/>
</dbReference>
<dbReference type="SUPFAM" id="SSF75217">
    <property type="entry name" value="alpha/beta knot"/>
    <property type="match status" value="1"/>
</dbReference>
<name>TRMD_MYCM1</name>
<comment type="function">
    <text evidence="1">Specifically methylates guanosine-37 in various tRNAs.</text>
</comment>
<comment type="catalytic activity">
    <reaction evidence="1">
        <text>guanosine(37) in tRNA + S-adenosyl-L-methionine = N(1)-methylguanosine(37) in tRNA + S-adenosyl-L-homocysteine + H(+)</text>
        <dbReference type="Rhea" id="RHEA:36899"/>
        <dbReference type="Rhea" id="RHEA-COMP:10145"/>
        <dbReference type="Rhea" id="RHEA-COMP:10147"/>
        <dbReference type="ChEBI" id="CHEBI:15378"/>
        <dbReference type="ChEBI" id="CHEBI:57856"/>
        <dbReference type="ChEBI" id="CHEBI:59789"/>
        <dbReference type="ChEBI" id="CHEBI:73542"/>
        <dbReference type="ChEBI" id="CHEBI:74269"/>
        <dbReference type="EC" id="2.1.1.228"/>
    </reaction>
</comment>
<comment type="subunit">
    <text evidence="1">Homodimer.</text>
</comment>
<comment type="subcellular location">
    <subcellularLocation>
        <location evidence="1">Cytoplasm</location>
    </subcellularLocation>
</comment>
<comment type="similarity">
    <text evidence="1">Belongs to the RNA methyltransferase TrmD family.</text>
</comment>
<feature type="chain" id="PRO_0000060414" description="tRNA (guanine-N(1)-)-methyltransferase">
    <location>
        <begin position="1"/>
        <end position="194"/>
    </location>
</feature>
<feature type="binding site" evidence="1">
    <location>
        <position position="78"/>
    </location>
    <ligand>
        <name>S-adenosyl-L-methionine</name>
        <dbReference type="ChEBI" id="CHEBI:59789"/>
    </ligand>
</feature>
<feature type="binding site" evidence="1">
    <location>
        <begin position="97"/>
        <end position="102"/>
    </location>
    <ligand>
        <name>S-adenosyl-L-methionine</name>
        <dbReference type="ChEBI" id="CHEBI:59789"/>
    </ligand>
</feature>
<reference key="1">
    <citation type="journal article" date="2004" name="Genome Res.">
        <title>The complete genome and proteome of Mycoplasma mobile.</title>
        <authorList>
            <person name="Jaffe J.D."/>
            <person name="Stange-Thomann N."/>
            <person name="Smith C."/>
            <person name="DeCaprio D."/>
            <person name="Fisher S."/>
            <person name="Butler J."/>
            <person name="Calvo S."/>
            <person name="Elkins T."/>
            <person name="FitzGerald M.G."/>
            <person name="Hafez N."/>
            <person name="Kodira C.D."/>
            <person name="Major J."/>
            <person name="Wang S."/>
            <person name="Wilkinson J."/>
            <person name="Nicol R."/>
            <person name="Nusbaum C."/>
            <person name="Birren B."/>
            <person name="Berg H.C."/>
            <person name="Church G.M."/>
        </authorList>
    </citation>
    <scope>NUCLEOTIDE SEQUENCE [LARGE SCALE GENOMIC DNA]</scope>
    <source>
        <strain>ATCC 43663 / NCTC 11711 / 163 K</strain>
    </source>
</reference>
<accession>Q6KHL5</accession>
<evidence type="ECO:0000255" key="1">
    <source>
        <dbReference type="HAMAP-Rule" id="MF_00605"/>
    </source>
</evidence>
<sequence length="194" mass="22341">MINIEIIDFRNFAYGKQKKVDDEIYGGGSGMLLKIEPIDLALENTKGKRILLSPQGKPFTQDDALKLSKEENLTFICGRYEGFDERIRNLIDEEYSIGDYVLTGGELASMVIADSTIRLIPGVIKEESYKNDSFQNNLLDYPQYTRPATYKNMNVPEVLLNGNHKEIKQWREQKAYEKTLKNRPDLIERKNNAK</sequence>
<organism>
    <name type="scientific">Mycoplasma mobile (strain ATCC 43663 / 163K / NCTC 11711)</name>
    <name type="common">Mesomycoplasma mobile</name>
    <dbReference type="NCBI Taxonomy" id="267748"/>
    <lineage>
        <taxon>Bacteria</taxon>
        <taxon>Bacillati</taxon>
        <taxon>Mycoplasmatota</taxon>
        <taxon>Mycoplasmoidales</taxon>
        <taxon>Metamycoplasmataceae</taxon>
        <taxon>Mesomycoplasma</taxon>
    </lineage>
</organism>
<protein>
    <recommendedName>
        <fullName evidence="1">tRNA (guanine-N(1)-)-methyltransferase</fullName>
        <ecNumber evidence="1">2.1.1.228</ecNumber>
    </recommendedName>
    <alternativeName>
        <fullName evidence="1">M1G-methyltransferase</fullName>
    </alternativeName>
    <alternativeName>
        <fullName evidence="1">tRNA [GM37] methyltransferase</fullName>
    </alternativeName>
</protein>